<gene>
    <name evidence="1" type="primary">nuoC</name>
    <name evidence="1" type="synonym">nuoCD</name>
    <name evidence="1" type="synonym">nuoD</name>
    <name type="ordered locus">KPK_1473</name>
</gene>
<organism>
    <name type="scientific">Klebsiella pneumoniae (strain 342)</name>
    <dbReference type="NCBI Taxonomy" id="507522"/>
    <lineage>
        <taxon>Bacteria</taxon>
        <taxon>Pseudomonadati</taxon>
        <taxon>Pseudomonadota</taxon>
        <taxon>Gammaproteobacteria</taxon>
        <taxon>Enterobacterales</taxon>
        <taxon>Enterobacteriaceae</taxon>
        <taxon>Klebsiella/Raoultella group</taxon>
        <taxon>Klebsiella</taxon>
        <taxon>Klebsiella pneumoniae complex</taxon>
    </lineage>
</organism>
<feature type="chain" id="PRO_1000143691" description="NADH-quinone oxidoreductase subunit C/D">
    <location>
        <begin position="1"/>
        <end position="602"/>
    </location>
</feature>
<feature type="region of interest" description="NADH dehydrogenase I subunit C" evidence="1">
    <location>
        <begin position="1"/>
        <end position="192"/>
    </location>
</feature>
<feature type="region of interest" description="NADH dehydrogenase I subunit D" evidence="1">
    <location>
        <begin position="216"/>
        <end position="602"/>
    </location>
</feature>
<protein>
    <recommendedName>
        <fullName evidence="1">NADH-quinone oxidoreductase subunit C/D</fullName>
        <ecNumber evidence="1">7.1.1.-</ecNumber>
    </recommendedName>
    <alternativeName>
        <fullName evidence="1">NADH dehydrogenase I subunit C/D</fullName>
    </alternativeName>
    <alternativeName>
        <fullName evidence="1">NDH-1 subunit C/D</fullName>
    </alternativeName>
</protein>
<sequence length="602" mass="69100">MVNNMTDLTAHDAAPAWQTRDHLDDPVIGELRNRFGPDAFTVQPTRTGVPVVWVKREQLLEVGDFLKKLPKPYVMLFDLHGMDERLRTHRDGLPAADFSVFYHLISIDRNRDIMLKVALSENDLHLPTFTKLFPNANWYERETWEMFGMTFDGHPNLRRIMMPPTWEGHPLRKDYPARATEFDPFELTKAKQDLEMEALTFKPEEWGMKRSTDNEDFMFLNLGPNHPSAHGAFRIILQLDGEEIVDCVPDIGYHHRGAEKMGERQSWHSYIPYTDRIEYLGGCVNEMPYVLAVEKLAGITVPDRVNVIRVMLSELFRINSHLLYISTFIQDVGAMTPVFFAFTDRQKIYDLVEAITGFRMHPAWFRIGGVAHDLPRGWDRLLREFLEWMPKRLDSYEKAALRNTILKGRSVGVAAYTAKEALEWGTTGAGLRATGIGFDVRKWRPYSGYENFDFEVPTGGGVSDCYTRVMLKVEELRQSLRILQQCLDNMPEGPFKADHPLTTPPPKERTLQHIETLITHFLQVSWGPVMPANESFQMIEATKGINSYYLTSDGSTMSYRTRVRTPSFAHLQQIPSAIRGSLVSDLIVYLGSIDFVMSDVDR</sequence>
<accession>B5XNV6</accession>
<dbReference type="EC" id="7.1.1.-" evidence="1"/>
<dbReference type="EMBL" id="CP000964">
    <property type="protein sequence ID" value="ACI09648.1"/>
    <property type="molecule type" value="Genomic_DNA"/>
</dbReference>
<dbReference type="SMR" id="B5XNV6"/>
<dbReference type="KEGG" id="kpe:KPK_1473"/>
<dbReference type="HOGENOM" id="CLU_015134_3_2_6"/>
<dbReference type="Proteomes" id="UP000001734">
    <property type="component" value="Chromosome"/>
</dbReference>
<dbReference type="GO" id="GO:0030964">
    <property type="term" value="C:NADH dehydrogenase complex"/>
    <property type="evidence" value="ECO:0007669"/>
    <property type="project" value="InterPro"/>
</dbReference>
<dbReference type="GO" id="GO:0005886">
    <property type="term" value="C:plasma membrane"/>
    <property type="evidence" value="ECO:0007669"/>
    <property type="project" value="UniProtKB-SubCell"/>
</dbReference>
<dbReference type="GO" id="GO:0051287">
    <property type="term" value="F:NAD binding"/>
    <property type="evidence" value="ECO:0007669"/>
    <property type="project" value="InterPro"/>
</dbReference>
<dbReference type="GO" id="GO:0008137">
    <property type="term" value="F:NADH dehydrogenase (ubiquinone) activity"/>
    <property type="evidence" value="ECO:0007669"/>
    <property type="project" value="InterPro"/>
</dbReference>
<dbReference type="GO" id="GO:0050136">
    <property type="term" value="F:NADH:ubiquinone reductase (non-electrogenic) activity"/>
    <property type="evidence" value="ECO:0007669"/>
    <property type="project" value="UniProtKB-UniRule"/>
</dbReference>
<dbReference type="GO" id="GO:0048038">
    <property type="term" value="F:quinone binding"/>
    <property type="evidence" value="ECO:0007669"/>
    <property type="project" value="UniProtKB-KW"/>
</dbReference>
<dbReference type="FunFam" id="1.10.645.10:FF:000001">
    <property type="entry name" value="NADH-quinone oxidoreductase subunit C/D"/>
    <property type="match status" value="1"/>
</dbReference>
<dbReference type="FunFam" id="3.30.460.80:FF:000001">
    <property type="entry name" value="NADH-quinone oxidoreductase subunit C/D"/>
    <property type="match status" value="1"/>
</dbReference>
<dbReference type="Gene3D" id="1.10.645.10">
    <property type="entry name" value="Cytochrome-c3 Hydrogenase, chain B"/>
    <property type="match status" value="1"/>
</dbReference>
<dbReference type="Gene3D" id="3.30.460.80">
    <property type="entry name" value="NADH:ubiquinone oxidoreductase, 30kDa subunit"/>
    <property type="match status" value="1"/>
</dbReference>
<dbReference type="HAMAP" id="MF_01357">
    <property type="entry name" value="NDH1_NuoC"/>
    <property type="match status" value="1"/>
</dbReference>
<dbReference type="HAMAP" id="MF_01359">
    <property type="entry name" value="NDH1_NuoCD_1"/>
    <property type="match status" value="1"/>
</dbReference>
<dbReference type="HAMAP" id="MF_01358">
    <property type="entry name" value="NDH1_NuoD"/>
    <property type="match status" value="1"/>
</dbReference>
<dbReference type="InterPro" id="IPR010218">
    <property type="entry name" value="NADH_DH_suC"/>
</dbReference>
<dbReference type="InterPro" id="IPR023062">
    <property type="entry name" value="NADH_DH_suCD"/>
</dbReference>
<dbReference type="InterPro" id="IPR001135">
    <property type="entry name" value="NADH_Q_OxRdtase_suD"/>
</dbReference>
<dbReference type="InterPro" id="IPR037232">
    <property type="entry name" value="NADH_quin_OxRdtase_su_C/D-like"/>
</dbReference>
<dbReference type="InterPro" id="IPR001268">
    <property type="entry name" value="NADH_UbQ_OxRdtase_30kDa_su"/>
</dbReference>
<dbReference type="InterPro" id="IPR014029">
    <property type="entry name" value="NADH_UbQ_OxRdtase_49kDa_CS"/>
</dbReference>
<dbReference type="InterPro" id="IPR020396">
    <property type="entry name" value="NADH_UbQ_OxRdtase_CS"/>
</dbReference>
<dbReference type="InterPro" id="IPR022885">
    <property type="entry name" value="NDH1_su_D/H"/>
</dbReference>
<dbReference type="InterPro" id="IPR029014">
    <property type="entry name" value="NiFe-Hase_large"/>
</dbReference>
<dbReference type="NCBIfam" id="TIGR01961">
    <property type="entry name" value="NuoC_fam"/>
    <property type="match status" value="1"/>
</dbReference>
<dbReference type="NCBIfam" id="TIGR01962">
    <property type="entry name" value="NuoD"/>
    <property type="match status" value="1"/>
</dbReference>
<dbReference type="NCBIfam" id="NF004739">
    <property type="entry name" value="PRK06075.1"/>
    <property type="match status" value="1"/>
</dbReference>
<dbReference type="NCBIfam" id="NF008728">
    <property type="entry name" value="PRK11742.1"/>
    <property type="match status" value="1"/>
</dbReference>
<dbReference type="PANTHER" id="PTHR11993:SF45">
    <property type="entry name" value="NADH-QUINONE OXIDOREDUCTASE SUBUNIT C_D"/>
    <property type="match status" value="1"/>
</dbReference>
<dbReference type="PANTHER" id="PTHR11993">
    <property type="entry name" value="NADH-UBIQUINONE OXIDOREDUCTASE 49 KDA SUBUNIT"/>
    <property type="match status" value="1"/>
</dbReference>
<dbReference type="Pfam" id="PF00329">
    <property type="entry name" value="Complex1_30kDa"/>
    <property type="match status" value="1"/>
</dbReference>
<dbReference type="Pfam" id="PF00346">
    <property type="entry name" value="Complex1_49kDa"/>
    <property type="match status" value="1"/>
</dbReference>
<dbReference type="SUPFAM" id="SSF56762">
    <property type="entry name" value="HydB/Nqo4-like"/>
    <property type="match status" value="1"/>
</dbReference>
<dbReference type="SUPFAM" id="SSF143243">
    <property type="entry name" value="Nqo5-like"/>
    <property type="match status" value="1"/>
</dbReference>
<dbReference type="PROSITE" id="PS00542">
    <property type="entry name" value="COMPLEX1_30K"/>
    <property type="match status" value="1"/>
</dbReference>
<dbReference type="PROSITE" id="PS00535">
    <property type="entry name" value="COMPLEX1_49K"/>
    <property type="match status" value="1"/>
</dbReference>
<reference key="1">
    <citation type="journal article" date="2008" name="PLoS Genet.">
        <title>Complete genome sequence of the N2-fixing broad host range endophyte Klebsiella pneumoniae 342 and virulence predictions verified in mice.</title>
        <authorList>
            <person name="Fouts D.E."/>
            <person name="Tyler H.L."/>
            <person name="DeBoy R.T."/>
            <person name="Daugherty S."/>
            <person name="Ren Q."/>
            <person name="Badger J.H."/>
            <person name="Durkin A.S."/>
            <person name="Huot H."/>
            <person name="Shrivastava S."/>
            <person name="Kothari S."/>
            <person name="Dodson R.J."/>
            <person name="Mohamoud Y."/>
            <person name="Khouri H."/>
            <person name="Roesch L.F.W."/>
            <person name="Krogfelt K.A."/>
            <person name="Struve C."/>
            <person name="Triplett E.W."/>
            <person name="Methe B.A."/>
        </authorList>
    </citation>
    <scope>NUCLEOTIDE SEQUENCE [LARGE SCALE GENOMIC DNA]</scope>
    <source>
        <strain>342</strain>
    </source>
</reference>
<proteinExistence type="inferred from homology"/>
<evidence type="ECO:0000255" key="1">
    <source>
        <dbReference type="HAMAP-Rule" id="MF_01359"/>
    </source>
</evidence>
<name>NUOCD_KLEP3</name>
<comment type="function">
    <text evidence="1">NDH-1 shuttles electrons from NADH, via FMN and iron-sulfur (Fe-S) centers, to quinones in the respiratory chain. The immediate electron acceptor for the enzyme in this species is believed to be ubiquinone. Couples the redox reaction to proton translocation (for every two electrons transferred, four hydrogen ions are translocated across the cytoplasmic membrane), and thus conserves the redox energy in a proton gradient.</text>
</comment>
<comment type="catalytic activity">
    <reaction evidence="1">
        <text>a quinone + NADH + 5 H(+)(in) = a quinol + NAD(+) + 4 H(+)(out)</text>
        <dbReference type="Rhea" id="RHEA:57888"/>
        <dbReference type="ChEBI" id="CHEBI:15378"/>
        <dbReference type="ChEBI" id="CHEBI:24646"/>
        <dbReference type="ChEBI" id="CHEBI:57540"/>
        <dbReference type="ChEBI" id="CHEBI:57945"/>
        <dbReference type="ChEBI" id="CHEBI:132124"/>
    </reaction>
</comment>
<comment type="subunit">
    <text evidence="1">NDH-1 is composed of 13 different subunits. Subunits NuoB, CD, E, F, and G constitute the peripheral sector of the complex.</text>
</comment>
<comment type="subcellular location">
    <subcellularLocation>
        <location evidence="1">Cell inner membrane</location>
        <topology evidence="1">Peripheral membrane protein</topology>
        <orientation evidence="1">Cytoplasmic side</orientation>
    </subcellularLocation>
</comment>
<comment type="similarity">
    <text evidence="1">In the N-terminal section; belongs to the complex I 30 kDa subunit family.</text>
</comment>
<comment type="similarity">
    <text evidence="1">In the C-terminal section; belongs to the complex I 49 kDa subunit family.</text>
</comment>
<keyword id="KW-0997">Cell inner membrane</keyword>
<keyword id="KW-1003">Cell membrane</keyword>
<keyword id="KW-0472">Membrane</keyword>
<keyword id="KW-0511">Multifunctional enzyme</keyword>
<keyword id="KW-0520">NAD</keyword>
<keyword id="KW-0874">Quinone</keyword>
<keyword id="KW-1278">Translocase</keyword>
<keyword id="KW-0813">Transport</keyword>
<keyword id="KW-0830">Ubiquinone</keyword>